<reference key="1">
    <citation type="journal article" date="1997" name="Nature">
        <title>The complete genome sequence of the Gram-positive bacterium Bacillus subtilis.</title>
        <authorList>
            <person name="Kunst F."/>
            <person name="Ogasawara N."/>
            <person name="Moszer I."/>
            <person name="Albertini A.M."/>
            <person name="Alloni G."/>
            <person name="Azevedo V."/>
            <person name="Bertero M.G."/>
            <person name="Bessieres P."/>
            <person name="Bolotin A."/>
            <person name="Borchert S."/>
            <person name="Borriss R."/>
            <person name="Boursier L."/>
            <person name="Brans A."/>
            <person name="Braun M."/>
            <person name="Brignell S.C."/>
            <person name="Bron S."/>
            <person name="Brouillet S."/>
            <person name="Bruschi C.V."/>
            <person name="Caldwell B."/>
            <person name="Capuano V."/>
            <person name="Carter N.M."/>
            <person name="Choi S.-K."/>
            <person name="Codani J.-J."/>
            <person name="Connerton I.F."/>
            <person name="Cummings N.J."/>
            <person name="Daniel R.A."/>
            <person name="Denizot F."/>
            <person name="Devine K.M."/>
            <person name="Duesterhoeft A."/>
            <person name="Ehrlich S.D."/>
            <person name="Emmerson P.T."/>
            <person name="Entian K.-D."/>
            <person name="Errington J."/>
            <person name="Fabret C."/>
            <person name="Ferrari E."/>
            <person name="Foulger D."/>
            <person name="Fritz C."/>
            <person name="Fujita M."/>
            <person name="Fujita Y."/>
            <person name="Fuma S."/>
            <person name="Galizzi A."/>
            <person name="Galleron N."/>
            <person name="Ghim S.-Y."/>
            <person name="Glaser P."/>
            <person name="Goffeau A."/>
            <person name="Golightly E.J."/>
            <person name="Grandi G."/>
            <person name="Guiseppi G."/>
            <person name="Guy B.J."/>
            <person name="Haga K."/>
            <person name="Haiech J."/>
            <person name="Harwood C.R."/>
            <person name="Henaut A."/>
            <person name="Hilbert H."/>
            <person name="Holsappel S."/>
            <person name="Hosono S."/>
            <person name="Hullo M.-F."/>
            <person name="Itaya M."/>
            <person name="Jones L.-M."/>
            <person name="Joris B."/>
            <person name="Karamata D."/>
            <person name="Kasahara Y."/>
            <person name="Klaerr-Blanchard M."/>
            <person name="Klein C."/>
            <person name="Kobayashi Y."/>
            <person name="Koetter P."/>
            <person name="Koningstein G."/>
            <person name="Krogh S."/>
            <person name="Kumano M."/>
            <person name="Kurita K."/>
            <person name="Lapidus A."/>
            <person name="Lardinois S."/>
            <person name="Lauber J."/>
            <person name="Lazarevic V."/>
            <person name="Lee S.-M."/>
            <person name="Levine A."/>
            <person name="Liu H."/>
            <person name="Masuda S."/>
            <person name="Mauel C."/>
            <person name="Medigue C."/>
            <person name="Medina N."/>
            <person name="Mellado R.P."/>
            <person name="Mizuno M."/>
            <person name="Moestl D."/>
            <person name="Nakai S."/>
            <person name="Noback M."/>
            <person name="Noone D."/>
            <person name="O'Reilly M."/>
            <person name="Ogawa K."/>
            <person name="Ogiwara A."/>
            <person name="Oudega B."/>
            <person name="Park S.-H."/>
            <person name="Parro V."/>
            <person name="Pohl T.M."/>
            <person name="Portetelle D."/>
            <person name="Porwollik S."/>
            <person name="Prescott A.M."/>
            <person name="Presecan E."/>
            <person name="Pujic P."/>
            <person name="Purnelle B."/>
            <person name="Rapoport G."/>
            <person name="Rey M."/>
            <person name="Reynolds S."/>
            <person name="Rieger M."/>
            <person name="Rivolta C."/>
            <person name="Rocha E."/>
            <person name="Roche B."/>
            <person name="Rose M."/>
            <person name="Sadaie Y."/>
            <person name="Sato T."/>
            <person name="Scanlan E."/>
            <person name="Schleich S."/>
            <person name="Schroeter R."/>
            <person name="Scoffone F."/>
            <person name="Sekiguchi J."/>
            <person name="Sekowska A."/>
            <person name="Seror S.J."/>
            <person name="Serror P."/>
            <person name="Shin B.-S."/>
            <person name="Soldo B."/>
            <person name="Sorokin A."/>
            <person name="Tacconi E."/>
            <person name="Takagi T."/>
            <person name="Takahashi H."/>
            <person name="Takemaru K."/>
            <person name="Takeuchi M."/>
            <person name="Tamakoshi A."/>
            <person name="Tanaka T."/>
            <person name="Terpstra P."/>
            <person name="Tognoni A."/>
            <person name="Tosato V."/>
            <person name="Uchiyama S."/>
            <person name="Vandenbol M."/>
            <person name="Vannier F."/>
            <person name="Vassarotti A."/>
            <person name="Viari A."/>
            <person name="Wambutt R."/>
            <person name="Wedler E."/>
            <person name="Wedler H."/>
            <person name="Weitzenegger T."/>
            <person name="Winters P."/>
            <person name="Wipat A."/>
            <person name="Yamamoto H."/>
            <person name="Yamane K."/>
            <person name="Yasumoto K."/>
            <person name="Yata K."/>
            <person name="Yoshida K."/>
            <person name="Yoshikawa H.-F."/>
            <person name="Zumstein E."/>
            <person name="Yoshikawa H."/>
            <person name="Danchin A."/>
        </authorList>
    </citation>
    <scope>NUCLEOTIDE SEQUENCE [LARGE SCALE GENOMIC DNA]</scope>
    <source>
        <strain>168</strain>
    </source>
</reference>
<reference key="2">
    <citation type="journal article" date="1997" name="Microbiology">
        <title>Identification of vegetative proteins for a two-dimensional protein index of Bacillus subtilis.</title>
        <authorList>
            <person name="Schmid R."/>
            <person name="Bernhardt J."/>
            <person name="Antelmann H."/>
            <person name="Voelker U."/>
            <person name="Mach H."/>
            <person name="Voelker A."/>
            <person name="Hecker M."/>
        </authorList>
    </citation>
    <scope>PROTEIN SEQUENCE OF 1-23</scope>
    <source>
        <strain>168 / IS58</strain>
    </source>
</reference>
<reference key="3">
    <citation type="journal article" date="1994" name="J. Bacteriol.">
        <title>Cloning and nucleotide sequences of the genes encoding triose phosphate isomerase, phosphoglycerate mutase, and enolase from Bacillus subtilis.</title>
        <authorList>
            <person name="Leyva-Vazquez M.A."/>
            <person name="Setlow P."/>
        </authorList>
    </citation>
    <scope>NUCLEOTIDE SEQUENCE [GENOMIC DNA] OF 377-394</scope>
    <source>
        <strain>168 / Marburg / ATCC 6051 / DSM 10 / JCM 1465 / NBRC 13719 / NCIMB 3610 / NRRL NRS-744 / VKM B-501</strain>
    </source>
</reference>
<reference key="4">
    <citation type="journal article" date="2007" name="Mol. Cell. Proteomics">
        <title>The serine/threonine/tyrosine phosphoproteome of the model bacterium Bacillus subtilis.</title>
        <authorList>
            <person name="Macek B."/>
            <person name="Mijakovic I."/>
            <person name="Olsen J.V."/>
            <person name="Gnad F."/>
            <person name="Kumar C."/>
            <person name="Jensen P.R."/>
            <person name="Mann M."/>
        </authorList>
    </citation>
    <scope>PHOSPHORYLATION [LARGE SCALE ANALYSIS] AT SER-183 AND THR-299</scope>
    <scope>IDENTIFICATION BY MASS SPECTROMETRY</scope>
    <source>
        <strain>168</strain>
    </source>
</reference>
<proteinExistence type="evidence at protein level"/>
<sequence>MNKKTLKDIDVKGKVVFCRVDFNVPMKDGEVTDDTRIRAALPTIKHLADQGAKVLLASHLGRPKGEVVEELRLTPVAARLGELLGKEVKKADEAYGDAVKAQISEMKDGDVLVLENVRFYPGEEKNDPELAKAFAELADVYVNDAFGAAHRAHASTAGIAEHLPAVAGFLMEKELDVLGKAVSNPDRPFTAIIGGAKVKDKIGVIESLLDKVDNLIIGGGLAYTFVKALGYEVGKSLLEEDKIELAKSFMDRAKEKGVNFYMPEDVLVADDFSNDANVKIVPISEIPSDLEAIDIGTKTRETYADVIKNSKLVVWNGPMGVFEIDLFAQGTKAVAEALAEAKDTYSVIGGGDSAAAVEKFGLADKMSHISTGGGASLEFMEGKELPGVAALNDK</sequence>
<feature type="chain" id="PRO_0000145905" description="Phosphoglycerate kinase">
    <location>
        <begin position="1"/>
        <end position="394"/>
    </location>
</feature>
<feature type="binding site" evidence="1">
    <location>
        <begin position="21"/>
        <end position="23"/>
    </location>
    <ligand>
        <name>substrate</name>
    </ligand>
</feature>
<feature type="binding site" evidence="1">
    <location>
        <position position="36"/>
    </location>
    <ligand>
        <name>substrate</name>
    </ligand>
</feature>
<feature type="binding site" evidence="1">
    <location>
        <begin position="59"/>
        <end position="62"/>
    </location>
    <ligand>
        <name>substrate</name>
    </ligand>
</feature>
<feature type="binding site" evidence="1">
    <location>
        <position position="118"/>
    </location>
    <ligand>
        <name>substrate</name>
    </ligand>
</feature>
<feature type="binding site" evidence="1">
    <location>
        <position position="151"/>
    </location>
    <ligand>
        <name>substrate</name>
    </ligand>
</feature>
<feature type="binding site" evidence="1">
    <location>
        <position position="201"/>
    </location>
    <ligand>
        <name>ATP</name>
        <dbReference type="ChEBI" id="CHEBI:30616"/>
    </ligand>
</feature>
<feature type="binding site" evidence="1">
    <location>
        <position position="323"/>
    </location>
    <ligand>
        <name>ATP</name>
        <dbReference type="ChEBI" id="CHEBI:30616"/>
    </ligand>
</feature>
<feature type="binding site" evidence="1">
    <location>
        <begin position="350"/>
        <end position="353"/>
    </location>
    <ligand>
        <name>ATP</name>
        <dbReference type="ChEBI" id="CHEBI:30616"/>
    </ligand>
</feature>
<feature type="modified residue" description="Phosphoserine" evidence="2">
    <location>
        <position position="183"/>
    </location>
</feature>
<feature type="modified residue" description="Phosphothreonine" evidence="2">
    <location>
        <position position="299"/>
    </location>
</feature>
<feature type="sequence conflict" description="In Ref. 3; AAA21678." evidence="3" ref="3">
    <original>V</original>
    <variation>A</variation>
    <location>
        <position position="388"/>
    </location>
</feature>
<feature type="sequence conflict" description="In Ref. 3; AAA21678." evidence="3" ref="3">
    <original>DK</original>
    <variation>R</variation>
    <location>
        <begin position="393"/>
        <end position="394"/>
    </location>
</feature>
<name>PGK_BACSU</name>
<protein>
    <recommendedName>
        <fullName>Phosphoglycerate kinase</fullName>
        <ecNumber>2.7.2.3</ecNumber>
    </recommendedName>
</protein>
<dbReference type="EC" id="2.7.2.3"/>
<dbReference type="EMBL" id="AL009126">
    <property type="protein sequence ID" value="CAB15398.1"/>
    <property type="molecule type" value="Genomic_DNA"/>
</dbReference>
<dbReference type="EMBL" id="L29475">
    <property type="protein sequence ID" value="AAA21678.1"/>
    <property type="molecule type" value="Genomic_DNA"/>
</dbReference>
<dbReference type="PIR" id="C69675">
    <property type="entry name" value="C69675"/>
</dbReference>
<dbReference type="RefSeq" id="NP_391273.1">
    <property type="nucleotide sequence ID" value="NC_000964.3"/>
</dbReference>
<dbReference type="RefSeq" id="WP_003243051.1">
    <property type="nucleotide sequence ID" value="NZ_OZ025638.1"/>
</dbReference>
<dbReference type="SMR" id="P40924"/>
<dbReference type="FunCoup" id="P40924">
    <property type="interactions" value="621"/>
</dbReference>
<dbReference type="STRING" id="224308.BSU33930"/>
<dbReference type="iPTMnet" id="P40924"/>
<dbReference type="jPOST" id="P40924"/>
<dbReference type="PaxDb" id="224308-BSU33930"/>
<dbReference type="EnsemblBacteria" id="CAB15398">
    <property type="protein sequence ID" value="CAB15398"/>
    <property type="gene ID" value="BSU_33930"/>
</dbReference>
<dbReference type="GeneID" id="938572"/>
<dbReference type="KEGG" id="bsu:BSU33930"/>
<dbReference type="PATRIC" id="fig|224308.179.peg.3678"/>
<dbReference type="eggNOG" id="COG0126">
    <property type="taxonomic scope" value="Bacteria"/>
</dbReference>
<dbReference type="InParanoid" id="P40924"/>
<dbReference type="OrthoDB" id="9808460at2"/>
<dbReference type="PhylomeDB" id="P40924"/>
<dbReference type="BioCyc" id="BSUB:BSU33930-MONOMER"/>
<dbReference type="UniPathway" id="UPA00109">
    <property type="reaction ID" value="UER00185"/>
</dbReference>
<dbReference type="Proteomes" id="UP000001570">
    <property type="component" value="Chromosome"/>
</dbReference>
<dbReference type="GO" id="GO:0005829">
    <property type="term" value="C:cytosol"/>
    <property type="evidence" value="ECO:0000318"/>
    <property type="project" value="GO_Central"/>
</dbReference>
<dbReference type="GO" id="GO:0043531">
    <property type="term" value="F:ADP binding"/>
    <property type="evidence" value="ECO:0000318"/>
    <property type="project" value="GO_Central"/>
</dbReference>
<dbReference type="GO" id="GO:0005524">
    <property type="term" value="F:ATP binding"/>
    <property type="evidence" value="ECO:0000318"/>
    <property type="project" value="GO_Central"/>
</dbReference>
<dbReference type="GO" id="GO:0004618">
    <property type="term" value="F:phosphoglycerate kinase activity"/>
    <property type="evidence" value="ECO:0000318"/>
    <property type="project" value="GO_Central"/>
</dbReference>
<dbReference type="GO" id="GO:0006094">
    <property type="term" value="P:gluconeogenesis"/>
    <property type="evidence" value="ECO:0000318"/>
    <property type="project" value="GO_Central"/>
</dbReference>
<dbReference type="GO" id="GO:0006096">
    <property type="term" value="P:glycolytic process"/>
    <property type="evidence" value="ECO:0000318"/>
    <property type="project" value="GO_Central"/>
</dbReference>
<dbReference type="CDD" id="cd00318">
    <property type="entry name" value="Phosphoglycerate_kinase"/>
    <property type="match status" value="1"/>
</dbReference>
<dbReference type="FunFam" id="3.40.50.1260:FF:000001">
    <property type="entry name" value="Phosphoglycerate kinase"/>
    <property type="match status" value="1"/>
</dbReference>
<dbReference type="FunFam" id="3.40.50.1260:FF:000002">
    <property type="entry name" value="Phosphoglycerate kinase"/>
    <property type="match status" value="1"/>
</dbReference>
<dbReference type="Gene3D" id="3.40.50.1260">
    <property type="entry name" value="Phosphoglycerate kinase, N-terminal domain"/>
    <property type="match status" value="2"/>
</dbReference>
<dbReference type="HAMAP" id="MF_00145">
    <property type="entry name" value="Phosphoglyc_kinase"/>
    <property type="match status" value="1"/>
</dbReference>
<dbReference type="InterPro" id="IPR001576">
    <property type="entry name" value="Phosphoglycerate_kinase"/>
</dbReference>
<dbReference type="InterPro" id="IPR015911">
    <property type="entry name" value="Phosphoglycerate_kinase_CS"/>
</dbReference>
<dbReference type="InterPro" id="IPR015824">
    <property type="entry name" value="Phosphoglycerate_kinase_N"/>
</dbReference>
<dbReference type="InterPro" id="IPR036043">
    <property type="entry name" value="Phosphoglycerate_kinase_sf"/>
</dbReference>
<dbReference type="PANTHER" id="PTHR11406">
    <property type="entry name" value="PHOSPHOGLYCERATE KINASE"/>
    <property type="match status" value="1"/>
</dbReference>
<dbReference type="PANTHER" id="PTHR11406:SF23">
    <property type="entry name" value="PHOSPHOGLYCERATE KINASE 1, CHLOROPLASTIC-RELATED"/>
    <property type="match status" value="1"/>
</dbReference>
<dbReference type="Pfam" id="PF00162">
    <property type="entry name" value="PGK"/>
    <property type="match status" value="1"/>
</dbReference>
<dbReference type="PIRSF" id="PIRSF000724">
    <property type="entry name" value="Pgk"/>
    <property type="match status" value="1"/>
</dbReference>
<dbReference type="PRINTS" id="PR00477">
    <property type="entry name" value="PHGLYCKINASE"/>
</dbReference>
<dbReference type="SUPFAM" id="SSF53748">
    <property type="entry name" value="Phosphoglycerate kinase"/>
    <property type="match status" value="1"/>
</dbReference>
<dbReference type="PROSITE" id="PS00111">
    <property type="entry name" value="PGLYCERATE_KINASE"/>
    <property type="match status" value="1"/>
</dbReference>
<comment type="catalytic activity">
    <reaction>
        <text>(2R)-3-phosphoglycerate + ATP = (2R)-3-phospho-glyceroyl phosphate + ADP</text>
        <dbReference type="Rhea" id="RHEA:14801"/>
        <dbReference type="ChEBI" id="CHEBI:30616"/>
        <dbReference type="ChEBI" id="CHEBI:57604"/>
        <dbReference type="ChEBI" id="CHEBI:58272"/>
        <dbReference type="ChEBI" id="CHEBI:456216"/>
        <dbReference type="EC" id="2.7.2.3"/>
    </reaction>
</comment>
<comment type="pathway">
    <text>Carbohydrate degradation; glycolysis; pyruvate from D-glyceraldehyde 3-phosphate: step 2/5.</text>
</comment>
<comment type="subunit">
    <text evidence="1">Monomer.</text>
</comment>
<comment type="subcellular location">
    <subcellularLocation>
        <location>Cytoplasm</location>
    </subcellularLocation>
</comment>
<comment type="similarity">
    <text evidence="3">Belongs to the phosphoglycerate kinase family.</text>
</comment>
<keyword id="KW-0067">ATP-binding</keyword>
<keyword id="KW-0963">Cytoplasm</keyword>
<keyword id="KW-0903">Direct protein sequencing</keyword>
<keyword id="KW-0324">Glycolysis</keyword>
<keyword id="KW-0418">Kinase</keyword>
<keyword id="KW-0547">Nucleotide-binding</keyword>
<keyword id="KW-0597">Phosphoprotein</keyword>
<keyword id="KW-1185">Reference proteome</keyword>
<keyword id="KW-0808">Transferase</keyword>
<accession>P40924</accession>
<accession>O32252</accession>
<evidence type="ECO:0000250" key="1"/>
<evidence type="ECO:0000269" key="2">
    <source>
    </source>
</evidence>
<evidence type="ECO:0000305" key="3"/>
<gene>
    <name type="primary">pgk</name>
    <name type="ordered locus">BSU33930</name>
</gene>
<organism>
    <name type="scientific">Bacillus subtilis (strain 168)</name>
    <dbReference type="NCBI Taxonomy" id="224308"/>
    <lineage>
        <taxon>Bacteria</taxon>
        <taxon>Bacillati</taxon>
        <taxon>Bacillota</taxon>
        <taxon>Bacilli</taxon>
        <taxon>Bacillales</taxon>
        <taxon>Bacillaceae</taxon>
        <taxon>Bacillus</taxon>
    </lineage>
</organism>